<name>MED6_ASPOR</name>
<evidence type="ECO:0000250" key="1"/>
<evidence type="ECO:0000256" key="2">
    <source>
        <dbReference type="SAM" id="MobiDB-lite"/>
    </source>
</evidence>
<evidence type="ECO:0000305" key="3"/>
<dbReference type="EMBL" id="BA000053">
    <property type="protein sequence ID" value="BAE61818.1"/>
    <property type="molecule type" value="Genomic_DNA"/>
</dbReference>
<dbReference type="RefSeq" id="XP_001822951.1">
    <property type="nucleotide sequence ID" value="XM_001822899.2"/>
</dbReference>
<dbReference type="SMR" id="Q2U9E7"/>
<dbReference type="STRING" id="510516.Q2U9E7"/>
<dbReference type="EnsemblFungi" id="BAE61818">
    <property type="protein sequence ID" value="BAE61818"/>
    <property type="gene ID" value="AO090701000058"/>
</dbReference>
<dbReference type="GeneID" id="5995008"/>
<dbReference type="KEGG" id="aor:AO090701000058"/>
<dbReference type="VEuPathDB" id="FungiDB:AO090701000058"/>
<dbReference type="HOGENOM" id="CLU_060172_2_0_1"/>
<dbReference type="OMA" id="ASHGHTY"/>
<dbReference type="OrthoDB" id="115685at5052"/>
<dbReference type="Proteomes" id="UP000006564">
    <property type="component" value="Chromosome 5"/>
</dbReference>
<dbReference type="GO" id="GO:0016592">
    <property type="term" value="C:mediator complex"/>
    <property type="evidence" value="ECO:0007669"/>
    <property type="project" value="InterPro"/>
</dbReference>
<dbReference type="GO" id="GO:0003712">
    <property type="term" value="F:transcription coregulator activity"/>
    <property type="evidence" value="ECO:0007669"/>
    <property type="project" value="InterPro"/>
</dbReference>
<dbReference type="GO" id="GO:0006357">
    <property type="term" value="P:regulation of transcription by RNA polymerase II"/>
    <property type="evidence" value="ECO:0007669"/>
    <property type="project" value="InterPro"/>
</dbReference>
<dbReference type="FunFam" id="3.10.450.580:FF:000003">
    <property type="entry name" value="Mediator of RNA polymerase II transcription subunit 6"/>
    <property type="match status" value="1"/>
</dbReference>
<dbReference type="Gene3D" id="3.10.450.580">
    <property type="entry name" value="Mediator complex, subunit Med6"/>
    <property type="match status" value="1"/>
</dbReference>
<dbReference type="InterPro" id="IPR007018">
    <property type="entry name" value="Mediator_Med6"/>
</dbReference>
<dbReference type="InterPro" id="IPR016612">
    <property type="entry name" value="Mediator_Med6_fun"/>
</dbReference>
<dbReference type="InterPro" id="IPR038566">
    <property type="entry name" value="Mediator_Med6_sf"/>
</dbReference>
<dbReference type="PANTHER" id="PTHR13104">
    <property type="entry name" value="MED-6-RELATED"/>
    <property type="match status" value="1"/>
</dbReference>
<dbReference type="Pfam" id="PF04934">
    <property type="entry name" value="Med6"/>
    <property type="match status" value="1"/>
</dbReference>
<dbReference type="PIRSF" id="PIRSF013286">
    <property type="entry name" value="MED6_fungi"/>
    <property type="match status" value="1"/>
</dbReference>
<proteinExistence type="inferred from homology"/>
<sequence>MASAQDGSMEEILWRSPAHVQMMGGFLHSNNILFYFAESPFFDATSNNASLAIQANYNETLRHFVETREAFEGRLKTMQGLEFVVAYDPLQAAAQTETSFAHEPSNIWVIRKQTRRKRAGLEDEVVVLSTYFVVGDCIYMAPSVASVVGNRLLSAVTSLTSLLKTASSLPSFTPSHGHTYLPPAPKPTDSSQPGAQSQQSKENTPMPDADSTKALLVGPQTANAGAILQDTRTFAESFSLLARYGEEFMDENPLVGEPGSFILSKSGDTDRGAASKQPSNVNRPGSIPGKVGTPQVKVDTPGKTPEKGATPSASDDSKIRKKKAKIGN</sequence>
<comment type="function">
    <text evidence="1">Component of the Mediator complex, a coactivator involved in the regulated transcription of nearly all RNA polymerase II-dependent genes. Mediator functions as a bridge to convey information from gene-specific regulatory proteins to the basal RNA polymerase II transcription machinery. Mediator is recruited to promoters by direct interactions with regulatory proteins and serves as a scaffold for the assembly of a functional preinitiation complex with RNA polymerase II and the general transcription factors (By similarity).</text>
</comment>
<comment type="subunit">
    <text evidence="1">Component of the Mediator complex.</text>
</comment>
<comment type="subcellular location">
    <subcellularLocation>
        <location evidence="1">Nucleus</location>
    </subcellularLocation>
</comment>
<comment type="similarity">
    <text evidence="3">Belongs to the Mediator complex subunit 6 family.</text>
</comment>
<organism>
    <name type="scientific">Aspergillus oryzae (strain ATCC 42149 / RIB 40)</name>
    <name type="common">Yellow koji mold</name>
    <dbReference type="NCBI Taxonomy" id="510516"/>
    <lineage>
        <taxon>Eukaryota</taxon>
        <taxon>Fungi</taxon>
        <taxon>Dikarya</taxon>
        <taxon>Ascomycota</taxon>
        <taxon>Pezizomycotina</taxon>
        <taxon>Eurotiomycetes</taxon>
        <taxon>Eurotiomycetidae</taxon>
        <taxon>Eurotiales</taxon>
        <taxon>Aspergillaceae</taxon>
        <taxon>Aspergillus</taxon>
        <taxon>Aspergillus subgen. Circumdati</taxon>
    </lineage>
</organism>
<accession>Q2U9E7</accession>
<gene>
    <name type="primary">med6</name>
    <name type="ORF">AO090701000058</name>
</gene>
<protein>
    <recommendedName>
        <fullName>Mediator of RNA polymerase II transcription subunit 6</fullName>
    </recommendedName>
    <alternativeName>
        <fullName>Mediator complex subunit 6</fullName>
    </alternativeName>
</protein>
<reference key="1">
    <citation type="journal article" date="2005" name="Nature">
        <title>Genome sequencing and analysis of Aspergillus oryzae.</title>
        <authorList>
            <person name="Machida M."/>
            <person name="Asai K."/>
            <person name="Sano M."/>
            <person name="Tanaka T."/>
            <person name="Kumagai T."/>
            <person name="Terai G."/>
            <person name="Kusumoto K."/>
            <person name="Arima T."/>
            <person name="Akita O."/>
            <person name="Kashiwagi Y."/>
            <person name="Abe K."/>
            <person name="Gomi K."/>
            <person name="Horiuchi H."/>
            <person name="Kitamoto K."/>
            <person name="Kobayashi T."/>
            <person name="Takeuchi M."/>
            <person name="Denning D.W."/>
            <person name="Galagan J.E."/>
            <person name="Nierman W.C."/>
            <person name="Yu J."/>
            <person name="Archer D.B."/>
            <person name="Bennett J.W."/>
            <person name="Bhatnagar D."/>
            <person name="Cleveland T.E."/>
            <person name="Fedorova N.D."/>
            <person name="Gotoh O."/>
            <person name="Horikawa H."/>
            <person name="Hosoyama A."/>
            <person name="Ichinomiya M."/>
            <person name="Igarashi R."/>
            <person name="Iwashita K."/>
            <person name="Juvvadi P.R."/>
            <person name="Kato M."/>
            <person name="Kato Y."/>
            <person name="Kin T."/>
            <person name="Kokubun A."/>
            <person name="Maeda H."/>
            <person name="Maeyama N."/>
            <person name="Maruyama J."/>
            <person name="Nagasaki H."/>
            <person name="Nakajima T."/>
            <person name="Oda K."/>
            <person name="Okada K."/>
            <person name="Paulsen I."/>
            <person name="Sakamoto K."/>
            <person name="Sawano T."/>
            <person name="Takahashi M."/>
            <person name="Takase K."/>
            <person name="Terabayashi Y."/>
            <person name="Wortman J.R."/>
            <person name="Yamada O."/>
            <person name="Yamagata Y."/>
            <person name="Anazawa H."/>
            <person name="Hata Y."/>
            <person name="Koide Y."/>
            <person name="Komori T."/>
            <person name="Koyama Y."/>
            <person name="Minetoki T."/>
            <person name="Suharnan S."/>
            <person name="Tanaka A."/>
            <person name="Isono K."/>
            <person name="Kuhara S."/>
            <person name="Ogasawara N."/>
            <person name="Kikuchi H."/>
        </authorList>
    </citation>
    <scope>NUCLEOTIDE SEQUENCE [LARGE SCALE GENOMIC DNA]</scope>
    <source>
        <strain>ATCC 42149 / RIB 40</strain>
    </source>
</reference>
<feature type="chain" id="PRO_0000303051" description="Mediator of RNA polymerase II transcription subunit 6">
    <location>
        <begin position="1"/>
        <end position="328"/>
    </location>
</feature>
<feature type="region of interest" description="Disordered" evidence="2">
    <location>
        <begin position="173"/>
        <end position="212"/>
    </location>
</feature>
<feature type="region of interest" description="Disordered" evidence="2">
    <location>
        <begin position="251"/>
        <end position="328"/>
    </location>
</feature>
<feature type="compositionally biased region" description="Polar residues" evidence="2">
    <location>
        <begin position="188"/>
        <end position="203"/>
    </location>
</feature>
<feature type="compositionally biased region" description="Basic residues" evidence="2">
    <location>
        <begin position="319"/>
        <end position="328"/>
    </location>
</feature>
<keyword id="KW-0010">Activator</keyword>
<keyword id="KW-0539">Nucleus</keyword>
<keyword id="KW-1185">Reference proteome</keyword>
<keyword id="KW-0804">Transcription</keyword>
<keyword id="KW-0805">Transcription regulation</keyword>